<evidence type="ECO:0000255" key="1">
    <source>
        <dbReference type="HAMAP-Rule" id="MF_00337"/>
    </source>
</evidence>
<dbReference type="EC" id="3.1.11.6" evidence="1"/>
<dbReference type="EMBL" id="AP009324">
    <property type="protein sequence ID" value="BAF78393.1"/>
    <property type="molecule type" value="Genomic_DNA"/>
</dbReference>
<dbReference type="RefSeq" id="WP_000159865.1">
    <property type="nucleotide sequence ID" value="NZ_CTYB01000003.1"/>
</dbReference>
<dbReference type="SMR" id="A7X2P9"/>
<dbReference type="KEGG" id="saw:SAHV_1510"/>
<dbReference type="HOGENOM" id="CLU_145918_3_2_9"/>
<dbReference type="GO" id="GO:0005829">
    <property type="term" value="C:cytosol"/>
    <property type="evidence" value="ECO:0007669"/>
    <property type="project" value="TreeGrafter"/>
</dbReference>
<dbReference type="GO" id="GO:0009318">
    <property type="term" value="C:exodeoxyribonuclease VII complex"/>
    <property type="evidence" value="ECO:0007669"/>
    <property type="project" value="InterPro"/>
</dbReference>
<dbReference type="GO" id="GO:0008855">
    <property type="term" value="F:exodeoxyribonuclease VII activity"/>
    <property type="evidence" value="ECO:0007669"/>
    <property type="project" value="UniProtKB-UniRule"/>
</dbReference>
<dbReference type="GO" id="GO:0006308">
    <property type="term" value="P:DNA catabolic process"/>
    <property type="evidence" value="ECO:0007669"/>
    <property type="project" value="UniProtKB-UniRule"/>
</dbReference>
<dbReference type="FunFam" id="1.10.287.1040:FF:000006">
    <property type="entry name" value="Exodeoxyribonuclease 7 small subunit"/>
    <property type="match status" value="1"/>
</dbReference>
<dbReference type="Gene3D" id="1.10.287.1040">
    <property type="entry name" value="Exonuclease VII, small subunit"/>
    <property type="match status" value="1"/>
</dbReference>
<dbReference type="HAMAP" id="MF_00337">
    <property type="entry name" value="Exonuc_7_S"/>
    <property type="match status" value="1"/>
</dbReference>
<dbReference type="InterPro" id="IPR003761">
    <property type="entry name" value="Exonuc_VII_S"/>
</dbReference>
<dbReference type="InterPro" id="IPR037004">
    <property type="entry name" value="Exonuc_VII_ssu_sf"/>
</dbReference>
<dbReference type="NCBIfam" id="NF002140">
    <property type="entry name" value="PRK00977.1-4"/>
    <property type="match status" value="1"/>
</dbReference>
<dbReference type="NCBIfam" id="NF010671">
    <property type="entry name" value="PRK14068.1"/>
    <property type="match status" value="1"/>
</dbReference>
<dbReference type="NCBIfam" id="TIGR01280">
    <property type="entry name" value="xseB"/>
    <property type="match status" value="1"/>
</dbReference>
<dbReference type="PANTHER" id="PTHR34137">
    <property type="entry name" value="EXODEOXYRIBONUCLEASE 7 SMALL SUBUNIT"/>
    <property type="match status" value="1"/>
</dbReference>
<dbReference type="PANTHER" id="PTHR34137:SF1">
    <property type="entry name" value="EXODEOXYRIBONUCLEASE 7 SMALL SUBUNIT"/>
    <property type="match status" value="1"/>
</dbReference>
<dbReference type="Pfam" id="PF02609">
    <property type="entry name" value="Exonuc_VII_S"/>
    <property type="match status" value="1"/>
</dbReference>
<dbReference type="PIRSF" id="PIRSF006488">
    <property type="entry name" value="Exonuc_VII_S"/>
    <property type="match status" value="1"/>
</dbReference>
<dbReference type="SUPFAM" id="SSF116842">
    <property type="entry name" value="XseB-like"/>
    <property type="match status" value="1"/>
</dbReference>
<reference key="1">
    <citation type="journal article" date="2008" name="Antimicrob. Agents Chemother.">
        <title>Mutated response regulator graR is responsible for phenotypic conversion of Staphylococcus aureus from heterogeneous vancomycin-intermediate resistance to vancomycin-intermediate resistance.</title>
        <authorList>
            <person name="Neoh H.-M."/>
            <person name="Cui L."/>
            <person name="Yuzawa H."/>
            <person name="Takeuchi F."/>
            <person name="Matsuo M."/>
            <person name="Hiramatsu K."/>
        </authorList>
    </citation>
    <scope>NUCLEOTIDE SEQUENCE [LARGE SCALE GENOMIC DNA]</scope>
    <source>
        <strain>Mu3 / ATCC 700698</strain>
    </source>
</reference>
<sequence>MTKETQSFEEMMQELEQIVQKLDNETVSLEESLDLYQRGMKLSAACDTTLKNAEKKVNDLIKEEAEDVKNDESTDE</sequence>
<organism>
    <name type="scientific">Staphylococcus aureus (strain Mu3 / ATCC 700698)</name>
    <dbReference type="NCBI Taxonomy" id="418127"/>
    <lineage>
        <taxon>Bacteria</taxon>
        <taxon>Bacillati</taxon>
        <taxon>Bacillota</taxon>
        <taxon>Bacilli</taxon>
        <taxon>Bacillales</taxon>
        <taxon>Staphylococcaceae</taxon>
        <taxon>Staphylococcus</taxon>
    </lineage>
</organism>
<comment type="function">
    <text evidence="1">Bidirectionally degrades single-stranded DNA into large acid-insoluble oligonucleotides, which are then degraded further into small acid-soluble oligonucleotides.</text>
</comment>
<comment type="catalytic activity">
    <reaction evidence="1">
        <text>Exonucleolytic cleavage in either 5'- to 3'- or 3'- to 5'-direction to yield nucleoside 5'-phosphates.</text>
        <dbReference type="EC" id="3.1.11.6"/>
    </reaction>
</comment>
<comment type="subunit">
    <text evidence="1">Heterooligomer composed of large and small subunits.</text>
</comment>
<comment type="subcellular location">
    <subcellularLocation>
        <location evidence="1">Cytoplasm</location>
    </subcellularLocation>
</comment>
<comment type="similarity">
    <text evidence="1">Belongs to the XseB family.</text>
</comment>
<keyword id="KW-0963">Cytoplasm</keyword>
<keyword id="KW-0269">Exonuclease</keyword>
<keyword id="KW-0378">Hydrolase</keyword>
<keyword id="KW-0540">Nuclease</keyword>
<proteinExistence type="inferred from homology"/>
<feature type="chain" id="PRO_1000019594" description="Exodeoxyribonuclease 7 small subunit">
    <location>
        <begin position="1"/>
        <end position="76"/>
    </location>
</feature>
<accession>A7X2P9</accession>
<name>EX7S_STAA1</name>
<protein>
    <recommendedName>
        <fullName evidence="1">Exodeoxyribonuclease 7 small subunit</fullName>
        <ecNumber evidence="1">3.1.11.6</ecNumber>
    </recommendedName>
    <alternativeName>
        <fullName evidence="1">Exodeoxyribonuclease VII small subunit</fullName>
        <shortName evidence="1">Exonuclease VII small subunit</shortName>
    </alternativeName>
</protein>
<gene>
    <name evidence="1" type="primary">xseB</name>
    <name type="ordered locus">SAHV_1510</name>
</gene>